<protein>
    <recommendedName>
        <fullName>GA-binding protein subunit beta-2</fullName>
        <shortName>GABP subunit beta-2</shortName>
        <shortName>GABPB-2</shortName>
    </recommendedName>
    <alternativeName>
        <fullName>GA-binding protein beta-2-1</fullName>
        <shortName>GABP subunit beta-2-1</shortName>
        <shortName>GABPB2-1</shortName>
    </alternativeName>
</protein>
<name>GABP2_MOUSE</name>
<organism>
    <name type="scientific">Mus musculus</name>
    <name type="common">Mouse</name>
    <dbReference type="NCBI Taxonomy" id="10090"/>
    <lineage>
        <taxon>Eukaryota</taxon>
        <taxon>Metazoa</taxon>
        <taxon>Chordata</taxon>
        <taxon>Craniata</taxon>
        <taxon>Vertebrata</taxon>
        <taxon>Euteleostomi</taxon>
        <taxon>Mammalia</taxon>
        <taxon>Eutheria</taxon>
        <taxon>Euarchontoglires</taxon>
        <taxon>Glires</taxon>
        <taxon>Rodentia</taxon>
        <taxon>Myomorpha</taxon>
        <taxon>Muroidea</taxon>
        <taxon>Muridae</taxon>
        <taxon>Murinae</taxon>
        <taxon>Mus</taxon>
        <taxon>Mus</taxon>
    </lineage>
</organism>
<comment type="function">
    <text>Transcription factor capable of interacting with purine rich repeats (GA repeats). Must associate with GABP-alpha to bind DNA.</text>
</comment>
<comment type="subunit">
    <text evidence="3">Heterotetramer of two alpha and two beta subunits. The C-terminal is necessary for the formation of a heterotetrameric GABP-alpha-2/beta-2 complex, and also facilitates homotypic dimerization. Interacts with ADGRB2 (PubMed:16412436).</text>
</comment>
<comment type="subcellular location">
    <subcellularLocation>
        <location evidence="1">Nucleus</location>
    </subcellularLocation>
</comment>
<comment type="alternative products">
    <event type="alternative splicing"/>
    <isoform>
        <id>P81069-1</id>
        <name>1</name>
        <sequence type="displayed"/>
    </isoform>
    <isoform>
        <id>P81069-2</id>
        <name>2</name>
        <sequence type="described" ref="VSP_032473"/>
    </isoform>
</comment>
<comment type="tissue specificity">
    <text>High levels in thymus, spleen, kidney and intestine.</text>
</comment>
<proteinExistence type="evidence at protein level"/>
<accession>P81069</accession>
<accession>A7E218</accession>
<accession>Q8CDA6</accession>
<keyword id="KW-0025">Alternative splicing</keyword>
<keyword id="KW-0040">ANK repeat</keyword>
<keyword id="KW-0175">Coiled coil</keyword>
<keyword id="KW-0539">Nucleus</keyword>
<keyword id="KW-0597">Phosphoprotein</keyword>
<keyword id="KW-1185">Reference proteome</keyword>
<keyword id="KW-0677">Repeat</keyword>
<keyword id="KW-0804">Transcription</keyword>
<keyword id="KW-0805">Transcription regulation</keyword>
<evidence type="ECO:0000250" key="1"/>
<evidence type="ECO:0000255" key="2"/>
<evidence type="ECO:0000269" key="3">
    <source>
    </source>
</evidence>
<evidence type="ECO:0000303" key="4">
    <source>
    </source>
</evidence>
<evidence type="ECO:0000305" key="5"/>
<evidence type="ECO:0007744" key="6">
    <source>
    </source>
</evidence>
<gene>
    <name type="primary">Gabpb2</name>
</gene>
<sequence>MSLVDLGKRLLEAARKGQDDEVRTLMANGAPFTTDWLGTSPLHLAAQYGHYSTAEVLLRAGVSRDARTKVDRTPLHMAAADGHVHIVELLVRSGADVNAKDMLQMTALHWATEHHHRDVVELLIKYGADVYAFSKFDKSAFDIAMEKNNTEILVMLQEAMQNQVNTNHERANPVANPVTVTAPFIFTSGEVINLASFVSSANTKATSAHLEEMEEGNSLDSSTQQVVGSGGQRVITIVTDGVPLGNIQTSLPAGGIGQPFIVTMQDGQQVLTVPAGQVAEETIIEDEEEEEEKLPLVKRPRMAEMTNRVEEMKEGSERELLQQQLQEANRRAQEYRHQLLKKEQEAEQYRLRLEAMAQQQTNGVEVDVTVVEEVAEVDAVVVTEGDEVERATQVMKSGRTTEPHTNVSIETISS</sequence>
<feature type="chain" id="PRO_0000066995" description="GA-binding protein subunit beta-2">
    <location>
        <begin position="1"/>
        <end position="414"/>
    </location>
</feature>
<feature type="repeat" description="ANK 1">
    <location>
        <begin position="5"/>
        <end position="34"/>
    </location>
</feature>
<feature type="repeat" description="ANK 2">
    <location>
        <begin position="37"/>
        <end position="66"/>
    </location>
</feature>
<feature type="repeat" description="ANK 3">
    <location>
        <begin position="70"/>
        <end position="99"/>
    </location>
</feature>
<feature type="repeat" description="ANK 4">
    <location>
        <begin position="103"/>
        <end position="132"/>
    </location>
</feature>
<feature type="repeat" description="ANK 5">
    <location>
        <begin position="136"/>
        <end position="166"/>
    </location>
</feature>
<feature type="coiled-coil region" evidence="2">
    <location>
        <begin position="310"/>
        <end position="362"/>
    </location>
</feature>
<feature type="modified residue" description="Phosphoserine" evidence="6">
    <location>
        <position position="218"/>
    </location>
</feature>
<feature type="splice variant" id="VSP_032473" description="In isoform 2." evidence="4">
    <location>
        <begin position="208"/>
        <end position="269"/>
    </location>
</feature>
<feature type="sequence conflict" description="In Ref. 1; no nucleotide entry." evidence="5" ref="1">
    <original>T</original>
    <variation>I</variation>
    <location>
        <position position="24"/>
    </location>
</feature>
<feature type="sequence conflict" description="In Ref. 1; no nucleotide entry." evidence="5" ref="1">
    <original>D</original>
    <variation>L</variation>
    <location>
        <position position="118"/>
    </location>
</feature>
<feature type="sequence conflict" description="In Ref. 1; no nucleotide entry." evidence="5" ref="1">
    <location>
        <position position="292"/>
    </location>
</feature>
<feature type="sequence conflict" description="In Ref. 1; no nucleotide entry." evidence="5" ref="1">
    <original>E</original>
    <variation>EC</variation>
    <location>
        <position position="347"/>
    </location>
</feature>
<feature type="sequence conflict" description="In Ref. 1; no nucleotide entry." evidence="5" ref="1">
    <original>T</original>
    <variation>R</variation>
    <location>
        <position position="361"/>
    </location>
</feature>
<feature type="sequence conflict" description="In Ref. 1; no nucleotide entry." evidence="5" ref="1">
    <original>D</original>
    <variation>Q</variation>
    <location>
        <position position="367"/>
    </location>
</feature>
<feature type="sequence conflict" description="In Ref. 1; no nucleotide entry." evidence="5" ref="1">
    <original>EE</original>
    <variation>QQ</variation>
    <location>
        <begin position="372"/>
        <end position="373"/>
    </location>
</feature>
<reference key="1">
    <citation type="journal article" date="1994" name="Genes Dev.">
        <title>Molecular and genetic characterization of GABP beta.</title>
        <authorList>
            <person name="de la Brousse F.C."/>
            <person name="Birkenmeier E.H."/>
            <person name="King D.S."/>
            <person name="Rowe L.B."/>
            <person name="McKnight S.L."/>
        </authorList>
    </citation>
    <scope>NUCLEOTIDE SEQUENCE [MRNA] (ISOFORM 1)</scope>
</reference>
<reference key="2">
    <citation type="journal article" date="2005" name="Science">
        <title>The transcriptional landscape of the mammalian genome.</title>
        <authorList>
            <person name="Carninci P."/>
            <person name="Kasukawa T."/>
            <person name="Katayama S."/>
            <person name="Gough J."/>
            <person name="Frith M.C."/>
            <person name="Maeda N."/>
            <person name="Oyama R."/>
            <person name="Ravasi T."/>
            <person name="Lenhard B."/>
            <person name="Wells C."/>
            <person name="Kodzius R."/>
            <person name="Shimokawa K."/>
            <person name="Bajic V.B."/>
            <person name="Brenner S.E."/>
            <person name="Batalov S."/>
            <person name="Forrest A.R."/>
            <person name="Zavolan M."/>
            <person name="Davis M.J."/>
            <person name="Wilming L.G."/>
            <person name="Aidinis V."/>
            <person name="Allen J.E."/>
            <person name="Ambesi-Impiombato A."/>
            <person name="Apweiler R."/>
            <person name="Aturaliya R.N."/>
            <person name="Bailey T.L."/>
            <person name="Bansal M."/>
            <person name="Baxter L."/>
            <person name="Beisel K.W."/>
            <person name="Bersano T."/>
            <person name="Bono H."/>
            <person name="Chalk A.M."/>
            <person name="Chiu K.P."/>
            <person name="Choudhary V."/>
            <person name="Christoffels A."/>
            <person name="Clutterbuck D.R."/>
            <person name="Crowe M.L."/>
            <person name="Dalla E."/>
            <person name="Dalrymple B.P."/>
            <person name="de Bono B."/>
            <person name="Della Gatta G."/>
            <person name="di Bernardo D."/>
            <person name="Down T."/>
            <person name="Engstrom P."/>
            <person name="Fagiolini M."/>
            <person name="Faulkner G."/>
            <person name="Fletcher C.F."/>
            <person name="Fukushima T."/>
            <person name="Furuno M."/>
            <person name="Futaki S."/>
            <person name="Gariboldi M."/>
            <person name="Georgii-Hemming P."/>
            <person name="Gingeras T.R."/>
            <person name="Gojobori T."/>
            <person name="Green R.E."/>
            <person name="Gustincich S."/>
            <person name="Harbers M."/>
            <person name="Hayashi Y."/>
            <person name="Hensch T.K."/>
            <person name="Hirokawa N."/>
            <person name="Hill D."/>
            <person name="Huminiecki L."/>
            <person name="Iacono M."/>
            <person name="Ikeo K."/>
            <person name="Iwama A."/>
            <person name="Ishikawa T."/>
            <person name="Jakt M."/>
            <person name="Kanapin A."/>
            <person name="Katoh M."/>
            <person name="Kawasawa Y."/>
            <person name="Kelso J."/>
            <person name="Kitamura H."/>
            <person name="Kitano H."/>
            <person name="Kollias G."/>
            <person name="Krishnan S.P."/>
            <person name="Kruger A."/>
            <person name="Kummerfeld S.K."/>
            <person name="Kurochkin I.V."/>
            <person name="Lareau L.F."/>
            <person name="Lazarevic D."/>
            <person name="Lipovich L."/>
            <person name="Liu J."/>
            <person name="Liuni S."/>
            <person name="McWilliam S."/>
            <person name="Madan Babu M."/>
            <person name="Madera M."/>
            <person name="Marchionni L."/>
            <person name="Matsuda H."/>
            <person name="Matsuzawa S."/>
            <person name="Miki H."/>
            <person name="Mignone F."/>
            <person name="Miyake S."/>
            <person name="Morris K."/>
            <person name="Mottagui-Tabar S."/>
            <person name="Mulder N."/>
            <person name="Nakano N."/>
            <person name="Nakauchi H."/>
            <person name="Ng P."/>
            <person name="Nilsson R."/>
            <person name="Nishiguchi S."/>
            <person name="Nishikawa S."/>
            <person name="Nori F."/>
            <person name="Ohara O."/>
            <person name="Okazaki Y."/>
            <person name="Orlando V."/>
            <person name="Pang K.C."/>
            <person name="Pavan W.J."/>
            <person name="Pavesi G."/>
            <person name="Pesole G."/>
            <person name="Petrovsky N."/>
            <person name="Piazza S."/>
            <person name="Reed J."/>
            <person name="Reid J.F."/>
            <person name="Ring B.Z."/>
            <person name="Ringwald M."/>
            <person name="Rost B."/>
            <person name="Ruan Y."/>
            <person name="Salzberg S.L."/>
            <person name="Sandelin A."/>
            <person name="Schneider C."/>
            <person name="Schoenbach C."/>
            <person name="Sekiguchi K."/>
            <person name="Semple C.A."/>
            <person name="Seno S."/>
            <person name="Sessa L."/>
            <person name="Sheng Y."/>
            <person name="Shibata Y."/>
            <person name="Shimada H."/>
            <person name="Shimada K."/>
            <person name="Silva D."/>
            <person name="Sinclair B."/>
            <person name="Sperling S."/>
            <person name="Stupka E."/>
            <person name="Sugiura K."/>
            <person name="Sultana R."/>
            <person name="Takenaka Y."/>
            <person name="Taki K."/>
            <person name="Tammoja K."/>
            <person name="Tan S.L."/>
            <person name="Tang S."/>
            <person name="Taylor M.S."/>
            <person name="Tegner J."/>
            <person name="Teichmann S.A."/>
            <person name="Ueda H.R."/>
            <person name="van Nimwegen E."/>
            <person name="Verardo R."/>
            <person name="Wei C.L."/>
            <person name="Yagi K."/>
            <person name="Yamanishi H."/>
            <person name="Zabarovsky E."/>
            <person name="Zhu S."/>
            <person name="Zimmer A."/>
            <person name="Hide W."/>
            <person name="Bult C."/>
            <person name="Grimmond S.M."/>
            <person name="Teasdale R.D."/>
            <person name="Liu E.T."/>
            <person name="Brusic V."/>
            <person name="Quackenbush J."/>
            <person name="Wahlestedt C."/>
            <person name="Mattick J.S."/>
            <person name="Hume D.A."/>
            <person name="Kai C."/>
            <person name="Sasaki D."/>
            <person name="Tomaru Y."/>
            <person name="Fukuda S."/>
            <person name="Kanamori-Katayama M."/>
            <person name="Suzuki M."/>
            <person name="Aoki J."/>
            <person name="Arakawa T."/>
            <person name="Iida J."/>
            <person name="Imamura K."/>
            <person name="Itoh M."/>
            <person name="Kato T."/>
            <person name="Kawaji H."/>
            <person name="Kawagashira N."/>
            <person name="Kawashima T."/>
            <person name="Kojima M."/>
            <person name="Kondo S."/>
            <person name="Konno H."/>
            <person name="Nakano K."/>
            <person name="Ninomiya N."/>
            <person name="Nishio T."/>
            <person name="Okada M."/>
            <person name="Plessy C."/>
            <person name="Shibata K."/>
            <person name="Shiraki T."/>
            <person name="Suzuki S."/>
            <person name="Tagami M."/>
            <person name="Waki K."/>
            <person name="Watahiki A."/>
            <person name="Okamura-Oho Y."/>
            <person name="Suzuki H."/>
            <person name="Kawai J."/>
            <person name="Hayashizaki Y."/>
        </authorList>
    </citation>
    <scope>NUCLEOTIDE SEQUENCE [LARGE SCALE MRNA] (ISOFORM 1)</scope>
    <source>
        <strain>C57BL/6J</strain>
        <tissue>Thymus</tissue>
    </source>
</reference>
<reference key="3">
    <citation type="journal article" date="2004" name="Genome Res.">
        <title>The status, quality, and expansion of the NIH full-length cDNA project: the Mammalian Gene Collection (MGC).</title>
        <authorList>
            <consortium name="The MGC Project Team"/>
        </authorList>
    </citation>
    <scope>NUCLEOTIDE SEQUENCE [LARGE SCALE MRNA] (ISOFORM 2)</scope>
</reference>
<reference key="4">
    <citation type="journal article" date="2006" name="FEBS Lett.">
        <title>Brain-specific angiogenesis inhibitor 2 regulates VEGF through GABP that acts as a transcriptional repressor.</title>
        <authorList>
            <person name="Jeong B.C."/>
            <person name="Kim M.Y."/>
            <person name="Lee J.H."/>
            <person name="Kee H.J."/>
            <person name="Kho D.H."/>
            <person name="Han K.E."/>
            <person name="Qian Y.R."/>
            <person name="Kim J.K."/>
            <person name="Kim K.K."/>
        </authorList>
    </citation>
    <scope>INTERACTION WITH ADGRB2</scope>
</reference>
<reference key="5">
    <citation type="journal article" date="2010" name="Cell">
        <title>A tissue-specific atlas of mouse protein phosphorylation and expression.</title>
        <authorList>
            <person name="Huttlin E.L."/>
            <person name="Jedrychowski M.P."/>
            <person name="Elias J.E."/>
            <person name="Goswami T."/>
            <person name="Rad R."/>
            <person name="Beausoleil S.A."/>
            <person name="Villen J."/>
            <person name="Haas W."/>
            <person name="Sowa M.E."/>
            <person name="Gygi S.P."/>
        </authorList>
    </citation>
    <scope>PHOSPHORYLATION [LARGE SCALE ANALYSIS] AT SER-218</scope>
    <scope>IDENTIFICATION BY MASS SPECTROMETRY [LARGE SCALE ANALYSIS]</scope>
    <source>
        <tissue>Kidney</tissue>
        <tissue>Spleen</tissue>
    </source>
</reference>
<dbReference type="EMBL" id="AK030849">
    <property type="protein sequence ID" value="BAC27157.1"/>
    <property type="molecule type" value="mRNA"/>
</dbReference>
<dbReference type="EMBL" id="AK141382">
    <property type="protein sequence ID" value="BAE24666.1"/>
    <property type="molecule type" value="mRNA"/>
</dbReference>
<dbReference type="EMBL" id="BC150160">
    <property type="protein sequence ID" value="AAI50161.1"/>
    <property type="molecule type" value="mRNA"/>
</dbReference>
<dbReference type="EMBL" id="BC150482">
    <property type="protein sequence ID" value="AAI50483.1"/>
    <property type="molecule type" value="mRNA"/>
</dbReference>
<dbReference type="CCDS" id="CCDS17605.1">
    <molecule id="P81069-1"/>
</dbReference>
<dbReference type="PIR" id="A53950">
    <property type="entry name" value="A53950"/>
</dbReference>
<dbReference type="RefSeq" id="NP_084161.1">
    <molecule id="P81069-1"/>
    <property type="nucleotide sequence ID" value="NM_029885.1"/>
</dbReference>
<dbReference type="RefSeq" id="NP_766100.1">
    <molecule id="P81069-1"/>
    <property type="nucleotide sequence ID" value="NM_172512.2"/>
</dbReference>
<dbReference type="RefSeq" id="XP_006501313.1">
    <molecule id="P81069-1"/>
    <property type="nucleotide sequence ID" value="XM_006501250.5"/>
</dbReference>
<dbReference type="RefSeq" id="XP_006501314.1">
    <molecule id="P81069-1"/>
    <property type="nucleotide sequence ID" value="XM_006501251.5"/>
</dbReference>
<dbReference type="RefSeq" id="XP_006501315.1">
    <molecule id="P81069-1"/>
    <property type="nucleotide sequence ID" value="XM_006501252.5"/>
</dbReference>
<dbReference type="RefSeq" id="XP_011238360.1">
    <molecule id="P81069-1"/>
    <property type="nucleotide sequence ID" value="XM_011240058.3"/>
</dbReference>
<dbReference type="RefSeq" id="XP_011238361.1">
    <molecule id="P81069-1"/>
    <property type="nucleotide sequence ID" value="XM_011240059.3"/>
</dbReference>
<dbReference type="RefSeq" id="XP_011238362.1">
    <molecule id="P81069-1"/>
    <property type="nucleotide sequence ID" value="XM_011240060.4"/>
</dbReference>
<dbReference type="RefSeq" id="XP_011238363.1">
    <molecule id="P81069-1"/>
    <property type="nucleotide sequence ID" value="XM_011240061.3"/>
</dbReference>
<dbReference type="RefSeq" id="XP_017175004.1">
    <molecule id="P81069-2"/>
    <property type="nucleotide sequence ID" value="XM_017319515.2"/>
</dbReference>
<dbReference type="SMR" id="P81069"/>
<dbReference type="FunCoup" id="P81069">
    <property type="interactions" value="2339"/>
</dbReference>
<dbReference type="STRING" id="10090.ENSMUSP00000121283"/>
<dbReference type="iPTMnet" id="P81069"/>
<dbReference type="PhosphoSitePlus" id="P81069"/>
<dbReference type="jPOST" id="P81069"/>
<dbReference type="PaxDb" id="10090-ENSMUSP00000121283"/>
<dbReference type="PeptideAtlas" id="P81069"/>
<dbReference type="ProteomicsDB" id="268835">
    <molecule id="P81069-1"/>
</dbReference>
<dbReference type="ProteomicsDB" id="268836">
    <molecule id="P81069-2"/>
</dbReference>
<dbReference type="Pumba" id="P81069"/>
<dbReference type="Antibodypedia" id="34049">
    <property type="antibodies" value="241 antibodies from 25 providers"/>
</dbReference>
<dbReference type="DNASU" id="213054"/>
<dbReference type="Ensembl" id="ENSMUST00000098873.11">
    <molecule id="P81069-1"/>
    <property type="protein sequence ID" value="ENSMUSP00000096470.5"/>
    <property type="gene ID" value="ENSMUSG00000038766.17"/>
</dbReference>
<dbReference type="Ensembl" id="ENSMUST00000107209.8">
    <molecule id="P81069-1"/>
    <property type="protein sequence ID" value="ENSMUSP00000102827.2"/>
    <property type="gene ID" value="ENSMUSG00000038766.17"/>
</dbReference>
<dbReference type="Ensembl" id="ENSMUST00000136139.8">
    <molecule id="P81069-1"/>
    <property type="protein sequence ID" value="ENSMUSP00000121283.2"/>
    <property type="gene ID" value="ENSMUSG00000038766.17"/>
</dbReference>
<dbReference type="GeneID" id="213054"/>
<dbReference type="KEGG" id="mmu:213054"/>
<dbReference type="UCSC" id="uc008qin.2">
    <molecule id="P81069-1"/>
    <property type="organism name" value="mouse"/>
</dbReference>
<dbReference type="UCSC" id="uc008qip.2">
    <molecule id="P81069-2"/>
    <property type="organism name" value="mouse"/>
</dbReference>
<dbReference type="AGR" id="MGI:95612"/>
<dbReference type="CTD" id="126626"/>
<dbReference type="MGI" id="MGI:95612">
    <property type="gene designation" value="Gabpb2"/>
</dbReference>
<dbReference type="VEuPathDB" id="HostDB:ENSMUSG00000038766"/>
<dbReference type="eggNOG" id="ENOG502QRTX">
    <property type="taxonomic scope" value="Eukaryota"/>
</dbReference>
<dbReference type="GeneTree" id="ENSGT00940000156794"/>
<dbReference type="HOGENOM" id="CLU_000134_12_0_1"/>
<dbReference type="InParanoid" id="P81069"/>
<dbReference type="OMA" id="NMNQVNL"/>
<dbReference type="OrthoDB" id="341259at2759"/>
<dbReference type="PhylomeDB" id="P81069"/>
<dbReference type="TreeFam" id="TF326036"/>
<dbReference type="BioGRID-ORCS" id="213054">
    <property type="hits" value="2 hits in 77 CRISPR screens"/>
</dbReference>
<dbReference type="ChiTaRS" id="Gabpb2">
    <property type="organism name" value="mouse"/>
</dbReference>
<dbReference type="PRO" id="PR:P81069"/>
<dbReference type="Proteomes" id="UP000000589">
    <property type="component" value="Chromosome 3"/>
</dbReference>
<dbReference type="RNAct" id="P81069">
    <property type="molecule type" value="protein"/>
</dbReference>
<dbReference type="Bgee" id="ENSMUSG00000038766">
    <property type="expression patterns" value="Expressed in manus and 218 other cell types or tissues"/>
</dbReference>
<dbReference type="ExpressionAtlas" id="P81069">
    <property type="expression patterns" value="baseline and differential"/>
</dbReference>
<dbReference type="GO" id="GO:0005634">
    <property type="term" value="C:nucleus"/>
    <property type="evidence" value="ECO:0000266"/>
    <property type="project" value="MGI"/>
</dbReference>
<dbReference type="GO" id="GO:0042802">
    <property type="term" value="F:identical protein binding"/>
    <property type="evidence" value="ECO:0000353"/>
    <property type="project" value="MGI"/>
</dbReference>
<dbReference type="GO" id="GO:0000976">
    <property type="term" value="F:transcription cis-regulatory region binding"/>
    <property type="evidence" value="ECO:0000266"/>
    <property type="project" value="MGI"/>
</dbReference>
<dbReference type="GO" id="GO:0045944">
    <property type="term" value="P:positive regulation of transcription by RNA polymerase II"/>
    <property type="evidence" value="ECO:0000266"/>
    <property type="project" value="MGI"/>
</dbReference>
<dbReference type="FunFam" id="1.25.40.20:FF:000025">
    <property type="entry name" value="GA-binding protein subunit beta-1 isoform X1"/>
    <property type="match status" value="1"/>
</dbReference>
<dbReference type="Gene3D" id="1.25.40.20">
    <property type="entry name" value="Ankyrin repeat-containing domain"/>
    <property type="match status" value="1"/>
</dbReference>
<dbReference type="InterPro" id="IPR050663">
    <property type="entry name" value="Ankyrin-SOCS_Box"/>
</dbReference>
<dbReference type="InterPro" id="IPR002110">
    <property type="entry name" value="Ankyrin_rpt"/>
</dbReference>
<dbReference type="InterPro" id="IPR036770">
    <property type="entry name" value="Ankyrin_rpt-contain_sf"/>
</dbReference>
<dbReference type="PANTHER" id="PTHR24193">
    <property type="entry name" value="ANKYRIN REPEAT PROTEIN"/>
    <property type="match status" value="1"/>
</dbReference>
<dbReference type="PANTHER" id="PTHR24193:SF86">
    <property type="entry name" value="GA-BINDING PROTEIN SUBUNIT BETA-2"/>
    <property type="match status" value="1"/>
</dbReference>
<dbReference type="Pfam" id="PF12796">
    <property type="entry name" value="Ank_2"/>
    <property type="match status" value="2"/>
</dbReference>
<dbReference type="PRINTS" id="PR01415">
    <property type="entry name" value="ANKYRIN"/>
</dbReference>
<dbReference type="SMART" id="SM00248">
    <property type="entry name" value="ANK"/>
    <property type="match status" value="4"/>
</dbReference>
<dbReference type="SUPFAM" id="SSF48403">
    <property type="entry name" value="Ankyrin repeat"/>
    <property type="match status" value="1"/>
</dbReference>
<dbReference type="PROSITE" id="PS50297">
    <property type="entry name" value="ANK_REP_REGION"/>
    <property type="match status" value="1"/>
</dbReference>
<dbReference type="PROSITE" id="PS50088">
    <property type="entry name" value="ANK_REPEAT"/>
    <property type="match status" value="3"/>
</dbReference>